<sequence length="105" mass="12043">MMNDTEFHKLVDHALMIIEEGIDESGADIESETTGNVLTLEFENRSQIVINRQEPLHELWLASKSGGYHFKYNNGEWHCTRSGEEFFALVKRECSVHAGETVDWS</sequence>
<reference key="1">
    <citation type="journal article" date="2005" name="Science">
        <title>Life at depth: Photobacterium profundum genome sequence and expression analysis.</title>
        <authorList>
            <person name="Vezzi A."/>
            <person name="Campanaro S."/>
            <person name="D'Angelo M."/>
            <person name="Simonato F."/>
            <person name="Vitulo N."/>
            <person name="Lauro F.M."/>
            <person name="Cestaro A."/>
            <person name="Malacrida G."/>
            <person name="Simionati B."/>
            <person name="Cannata N."/>
            <person name="Romualdi C."/>
            <person name="Bartlett D.H."/>
            <person name="Valle G."/>
        </authorList>
    </citation>
    <scope>NUCLEOTIDE SEQUENCE [LARGE SCALE GENOMIC DNA]</scope>
    <source>
        <strain>ATCC BAA-1253 / SS9</strain>
    </source>
</reference>
<proteinExistence type="inferred from homology"/>
<name>CYAY_PHOPR</name>
<feature type="chain" id="PRO_0000193949" description="Iron-sulfur cluster assembly protein CyaY">
    <location>
        <begin position="1"/>
        <end position="105"/>
    </location>
</feature>
<dbReference type="EMBL" id="CR378674">
    <property type="protein sequence ID" value="CAG21795.1"/>
    <property type="molecule type" value="Genomic_DNA"/>
</dbReference>
<dbReference type="SMR" id="Q6LLN3"/>
<dbReference type="STRING" id="298386.PBPRA3524"/>
<dbReference type="KEGG" id="ppr:PBPRA3524"/>
<dbReference type="eggNOG" id="COG1965">
    <property type="taxonomic scope" value="Bacteria"/>
</dbReference>
<dbReference type="HOGENOM" id="CLU_080880_3_0_6"/>
<dbReference type="Proteomes" id="UP000000593">
    <property type="component" value="Chromosome 1"/>
</dbReference>
<dbReference type="GO" id="GO:0005829">
    <property type="term" value="C:cytosol"/>
    <property type="evidence" value="ECO:0007669"/>
    <property type="project" value="TreeGrafter"/>
</dbReference>
<dbReference type="GO" id="GO:0008199">
    <property type="term" value="F:ferric iron binding"/>
    <property type="evidence" value="ECO:0007669"/>
    <property type="project" value="InterPro"/>
</dbReference>
<dbReference type="GO" id="GO:0008198">
    <property type="term" value="F:ferrous iron binding"/>
    <property type="evidence" value="ECO:0007669"/>
    <property type="project" value="TreeGrafter"/>
</dbReference>
<dbReference type="GO" id="GO:0016226">
    <property type="term" value="P:iron-sulfur cluster assembly"/>
    <property type="evidence" value="ECO:0007669"/>
    <property type="project" value="UniProtKB-UniRule"/>
</dbReference>
<dbReference type="CDD" id="cd00503">
    <property type="entry name" value="Frataxin"/>
    <property type="match status" value="1"/>
</dbReference>
<dbReference type="Gene3D" id="3.30.920.10">
    <property type="entry name" value="Frataxin/CyaY"/>
    <property type="match status" value="1"/>
</dbReference>
<dbReference type="HAMAP" id="MF_00142">
    <property type="entry name" value="CyaY"/>
    <property type="match status" value="1"/>
</dbReference>
<dbReference type="InterPro" id="IPR047584">
    <property type="entry name" value="CyaY"/>
</dbReference>
<dbReference type="InterPro" id="IPR002908">
    <property type="entry name" value="Frataxin/CyaY"/>
</dbReference>
<dbReference type="InterPro" id="IPR036524">
    <property type="entry name" value="Frataxin/CyaY_sf"/>
</dbReference>
<dbReference type="InterPro" id="IPR020895">
    <property type="entry name" value="Frataxin_CS"/>
</dbReference>
<dbReference type="NCBIfam" id="TIGR03421">
    <property type="entry name" value="FeS_CyaY"/>
    <property type="match status" value="1"/>
</dbReference>
<dbReference type="PANTHER" id="PTHR16821">
    <property type="entry name" value="FRATAXIN"/>
    <property type="match status" value="1"/>
</dbReference>
<dbReference type="PANTHER" id="PTHR16821:SF2">
    <property type="entry name" value="FRATAXIN, MITOCHONDRIAL"/>
    <property type="match status" value="1"/>
</dbReference>
<dbReference type="Pfam" id="PF01491">
    <property type="entry name" value="Frataxin_Cyay"/>
    <property type="match status" value="1"/>
</dbReference>
<dbReference type="SMART" id="SM01219">
    <property type="entry name" value="Frataxin_Cyay"/>
    <property type="match status" value="1"/>
</dbReference>
<dbReference type="SUPFAM" id="SSF55387">
    <property type="entry name" value="Frataxin/Nqo15-like"/>
    <property type="match status" value="1"/>
</dbReference>
<dbReference type="PROSITE" id="PS01344">
    <property type="entry name" value="FRATAXIN_1"/>
    <property type="match status" value="1"/>
</dbReference>
<dbReference type="PROSITE" id="PS50810">
    <property type="entry name" value="FRATAXIN_2"/>
    <property type="match status" value="1"/>
</dbReference>
<evidence type="ECO:0000255" key="1">
    <source>
        <dbReference type="HAMAP-Rule" id="MF_00142"/>
    </source>
</evidence>
<organism>
    <name type="scientific">Photobacterium profundum (strain SS9)</name>
    <dbReference type="NCBI Taxonomy" id="298386"/>
    <lineage>
        <taxon>Bacteria</taxon>
        <taxon>Pseudomonadati</taxon>
        <taxon>Pseudomonadota</taxon>
        <taxon>Gammaproteobacteria</taxon>
        <taxon>Vibrionales</taxon>
        <taxon>Vibrionaceae</taxon>
        <taxon>Photobacterium</taxon>
    </lineage>
</organism>
<keyword id="KW-0408">Iron</keyword>
<keyword id="KW-0479">Metal-binding</keyword>
<keyword id="KW-1185">Reference proteome</keyword>
<accession>Q6LLN3</accession>
<protein>
    <recommendedName>
        <fullName evidence="1">Iron-sulfur cluster assembly protein CyaY</fullName>
    </recommendedName>
</protein>
<gene>
    <name evidence="1" type="primary">cyaY</name>
    <name type="ordered locus">PBPRA3524</name>
</gene>
<comment type="function">
    <text evidence="1">Involved in iron-sulfur (Fe-S) cluster assembly. May act as a regulator of Fe-S biogenesis.</text>
</comment>
<comment type="similarity">
    <text evidence="1">Belongs to the frataxin family.</text>
</comment>